<keyword id="KW-0012">Acyltransferase</keyword>
<keyword id="KW-0276">Fatty acid metabolism</keyword>
<keyword id="KW-0443">Lipid metabolism</keyword>
<keyword id="KW-1185">Reference proteome</keyword>
<keyword id="KW-0808">Transferase</keyword>
<accession>Q7VEU7</accession>
<accession>A0A1R3XZB9</accession>
<accession>X2BIL5</accession>
<gene>
    <name type="primary">pks11</name>
    <name type="ordered locus">BQ2027_MB1693</name>
</gene>
<sequence>MSVIAGVFGALPPHRYSQSEITDSFVEFPGLKEHEEIIRRLHAAAKVNGRHLVLPLQQYPSLTDFGDANEIFIEKAVDLGVEALLGALDDANLRPSDIDMIATATVTGVAVPSLDARIAGRLGLRPDVRRMPLFGLGCVAGAAGVARLRDYLRGAPDDVAVLVSVELCSLTYPAVKPTVSSLVGTALFGDGAAAVVAVGDRRAEQVRAGGPDILDSRSSLYPDSLHIMGWDVGSHGLRLRLSPDLTNLIERYLANDVTTFLDAHRLTKDDIGAWVSHPGGPKVIDAVATSLALPPEALELTWRSLGEIGNLSSASILHILRDTIEKRPPSGSAGLMLAMGPGFCTELVLLRWR</sequence>
<protein>
    <recommendedName>
        <fullName evidence="1">Methyl-branched alkylpyrone synthesis polyketide synthase-like Pks11</fullName>
        <ecNumber evidence="1">2.3.1.-</ecNumber>
    </recommendedName>
    <alternativeName>
        <fullName evidence="1">Methyl-branched alkylpyrone synthesis polyketide synthase type III Pks11</fullName>
    </alternativeName>
</protein>
<comment type="function">
    <text evidence="1">Involved in the biosynthesis of methyl-branched alkylpyrones. Pks11 catalyzes the extension of medium- and long-chain aliphatic acyl-CoA substrates by using malonyl-CoA and methylmalonyl-CoA as extender molecules to synthesize polyketide products. Palmitoyl-CoA or a similar long chain fatty acid derivative is the likely substrate in vivo.</text>
</comment>
<comment type="pathway">
    <text evidence="1">Lipid metabolism; fatty acid biosynthesis.</text>
</comment>
<comment type="subunit">
    <text evidence="1">Homodimer.</text>
</comment>
<comment type="similarity">
    <text evidence="2">Belongs to the thiolase-like superfamily. Chalcone/stilbene synthases family.</text>
</comment>
<evidence type="ECO:0000250" key="1">
    <source>
        <dbReference type="UniProtKB" id="P9WPF3"/>
    </source>
</evidence>
<evidence type="ECO:0000305" key="2"/>
<organism>
    <name type="scientific">Mycobacterium bovis (strain ATCC BAA-935 / AF2122/97)</name>
    <dbReference type="NCBI Taxonomy" id="233413"/>
    <lineage>
        <taxon>Bacteria</taxon>
        <taxon>Bacillati</taxon>
        <taxon>Actinomycetota</taxon>
        <taxon>Actinomycetes</taxon>
        <taxon>Mycobacteriales</taxon>
        <taxon>Mycobacteriaceae</taxon>
        <taxon>Mycobacterium</taxon>
        <taxon>Mycobacterium tuberculosis complex</taxon>
    </lineage>
</organism>
<name>PKS11_MYCBO</name>
<reference key="1">
    <citation type="journal article" date="2003" name="Proc. Natl. Acad. Sci. U.S.A.">
        <title>The complete genome sequence of Mycobacterium bovis.</title>
        <authorList>
            <person name="Garnier T."/>
            <person name="Eiglmeier K."/>
            <person name="Camus J.-C."/>
            <person name="Medina N."/>
            <person name="Mansoor H."/>
            <person name="Pryor M."/>
            <person name="Duthoy S."/>
            <person name="Grondin S."/>
            <person name="Lacroix C."/>
            <person name="Monsempe C."/>
            <person name="Simon S."/>
            <person name="Harris B."/>
            <person name="Atkin R."/>
            <person name="Doggett J."/>
            <person name="Mayes R."/>
            <person name="Keating L."/>
            <person name="Wheeler P.R."/>
            <person name="Parkhill J."/>
            <person name="Barrell B.G."/>
            <person name="Cole S.T."/>
            <person name="Gordon S.V."/>
            <person name="Hewinson R.G."/>
        </authorList>
    </citation>
    <scope>NUCLEOTIDE SEQUENCE [LARGE SCALE GENOMIC DNA]</scope>
    <source>
        <strain>ATCC BAA-935 / AF2122/97</strain>
    </source>
</reference>
<reference key="2">
    <citation type="journal article" date="2017" name="Genome Announc.">
        <title>Updated reference genome sequence and annotation of Mycobacterium bovis AF2122/97.</title>
        <authorList>
            <person name="Malone K.M."/>
            <person name="Farrell D."/>
            <person name="Stuber T.P."/>
            <person name="Schubert O.T."/>
            <person name="Aebersold R."/>
            <person name="Robbe-Austerman S."/>
            <person name="Gordon S.V."/>
        </authorList>
    </citation>
    <scope>NUCLEOTIDE SEQUENCE [LARGE SCALE GENOMIC DNA]</scope>
    <scope>GENOME REANNOTATION</scope>
    <source>
        <strain>ATCC BAA-935 / AF2122/97</strain>
    </source>
</reference>
<proteinExistence type="inferred from homology"/>
<dbReference type="EC" id="2.3.1.-" evidence="1"/>
<dbReference type="EMBL" id="LT708304">
    <property type="protein sequence ID" value="SIU00296.1"/>
    <property type="molecule type" value="Genomic_DNA"/>
</dbReference>
<dbReference type="RefSeq" id="NP_855345.1">
    <property type="nucleotide sequence ID" value="NC_002945.3"/>
</dbReference>
<dbReference type="RefSeq" id="WP_003408248.1">
    <property type="nucleotide sequence ID" value="NC_002945.4"/>
</dbReference>
<dbReference type="SMR" id="Q7VEU7"/>
<dbReference type="KEGG" id="mbo:BQ2027_MB1693"/>
<dbReference type="PATRIC" id="fig|233413.5.peg.1846"/>
<dbReference type="UniPathway" id="UPA00094"/>
<dbReference type="Proteomes" id="UP000001419">
    <property type="component" value="Chromosome"/>
</dbReference>
<dbReference type="GO" id="GO:0016747">
    <property type="term" value="F:acyltransferase activity, transferring groups other than amino-acyl groups"/>
    <property type="evidence" value="ECO:0007669"/>
    <property type="project" value="InterPro"/>
</dbReference>
<dbReference type="GO" id="GO:0006633">
    <property type="term" value="P:fatty acid biosynthetic process"/>
    <property type="evidence" value="ECO:0007669"/>
    <property type="project" value="UniProtKB-UniPathway"/>
</dbReference>
<dbReference type="GO" id="GO:0030639">
    <property type="term" value="P:polyketide biosynthetic process"/>
    <property type="evidence" value="ECO:0007669"/>
    <property type="project" value="TreeGrafter"/>
</dbReference>
<dbReference type="CDD" id="cd00831">
    <property type="entry name" value="CHS_like"/>
    <property type="match status" value="1"/>
</dbReference>
<dbReference type="FunFam" id="3.40.47.10:FF:000053">
    <property type="entry name" value="Alpha-pyrone synthesis polyketide synthase"/>
    <property type="match status" value="1"/>
</dbReference>
<dbReference type="FunFam" id="3.40.47.10:FF:000014">
    <property type="entry name" value="Chalcone synthase 1"/>
    <property type="match status" value="1"/>
</dbReference>
<dbReference type="Gene3D" id="3.40.47.10">
    <property type="match status" value="2"/>
</dbReference>
<dbReference type="InterPro" id="IPR012328">
    <property type="entry name" value="Chalcone/stilbene_synt_C"/>
</dbReference>
<dbReference type="InterPro" id="IPR001099">
    <property type="entry name" value="Chalcone/stilbene_synt_N"/>
</dbReference>
<dbReference type="InterPro" id="IPR011141">
    <property type="entry name" value="Polyketide_synthase_type-III"/>
</dbReference>
<dbReference type="InterPro" id="IPR016039">
    <property type="entry name" value="Thiolase-like"/>
</dbReference>
<dbReference type="PANTHER" id="PTHR11877:SF99">
    <property type="entry name" value="1,3,6,8-TETRAHYDROXYNAPHTHALENE SYNTHASE"/>
    <property type="match status" value="1"/>
</dbReference>
<dbReference type="PANTHER" id="PTHR11877">
    <property type="entry name" value="HYDROXYMETHYLGLUTARYL-COA SYNTHASE"/>
    <property type="match status" value="1"/>
</dbReference>
<dbReference type="Pfam" id="PF02797">
    <property type="entry name" value="Chal_sti_synt_C"/>
    <property type="match status" value="1"/>
</dbReference>
<dbReference type="Pfam" id="PF00195">
    <property type="entry name" value="Chal_sti_synt_N"/>
    <property type="match status" value="1"/>
</dbReference>
<dbReference type="PIRSF" id="PIRSF000451">
    <property type="entry name" value="PKS_III"/>
    <property type="match status" value="1"/>
</dbReference>
<dbReference type="SUPFAM" id="SSF53901">
    <property type="entry name" value="Thiolase-like"/>
    <property type="match status" value="1"/>
</dbReference>
<feature type="chain" id="PRO_0000407319" description="Methyl-branched alkylpyrone synthesis polyketide synthase-like Pks11">
    <location>
        <begin position="1"/>
        <end position="353"/>
    </location>
</feature>
<feature type="active site" description="Nucleophile" evidence="1">
    <location>
        <position position="138"/>
    </location>
</feature>
<feature type="binding site" evidence="1">
    <location>
        <position position="180"/>
    </location>
    <ligand>
        <name>substrate</name>
    </ligand>
</feature>
<feature type="binding site" evidence="1">
    <location>
        <position position="241"/>
    </location>
    <ligand>
        <name>substrate</name>
    </ligand>
</feature>
<feature type="binding site" evidence="1">
    <location>
        <begin position="277"/>
        <end position="282"/>
    </location>
    <ligand>
        <name>substrate</name>
    </ligand>
</feature>
<feature type="binding site" evidence="1">
    <location>
        <position position="312"/>
    </location>
    <ligand>
        <name>substrate</name>
    </ligand>
</feature>